<organism evidence="8">
    <name type="scientific">Aedes aegypti</name>
    <name type="common">Yellowfever mosquito</name>
    <name type="synonym">Culex aegypti</name>
    <dbReference type="NCBI Taxonomy" id="7159"/>
    <lineage>
        <taxon>Eukaryota</taxon>
        <taxon>Metazoa</taxon>
        <taxon>Ecdysozoa</taxon>
        <taxon>Arthropoda</taxon>
        <taxon>Hexapoda</taxon>
        <taxon>Insecta</taxon>
        <taxon>Pterygota</taxon>
        <taxon>Neoptera</taxon>
        <taxon>Endopterygota</taxon>
        <taxon>Diptera</taxon>
        <taxon>Nematocera</taxon>
        <taxon>Culicoidea</taxon>
        <taxon>Culicidae</taxon>
        <taxon>Culicinae</taxon>
        <taxon>Aedini</taxon>
        <taxon>Aedes</taxon>
        <taxon>Stegomyia</taxon>
    </lineage>
</organism>
<protein>
    <recommendedName>
        <fullName evidence="6">Cathepsin L-like peptidase</fullName>
        <shortName evidence="6">AaCatL</shortName>
        <ecNumber evidence="5">3.4.22.15</ecNumber>
    </recommendedName>
    <component>
        <recommendedName>
            <fullName>Cathepsin L heavy chain</fullName>
        </recommendedName>
    </component>
    <component>
        <recommendedName>
            <fullName>Cathepsin L light chain</fullName>
        </recommendedName>
    </component>
</protein>
<feature type="signal peptide" evidence="3">
    <location>
        <begin position="1"/>
        <end position="16"/>
    </location>
</feature>
<feature type="chain" id="PRO_0000461061" description="Cathepsin L-like peptidase" evidence="3">
    <location>
        <begin position="17"/>
        <end position="339"/>
    </location>
</feature>
<feature type="propeptide" id="PRO_0000461062" description="Activation peptide" evidence="2">
    <location>
        <begin position="17"/>
        <end position="121"/>
    </location>
</feature>
<feature type="chain" id="PRO_0000461063" description="Cathepsin L heavy chain" evidence="2">
    <location>
        <begin position="122"/>
        <end position="294"/>
    </location>
</feature>
<feature type="chain" id="PRO_0000461064" description="Cathepsin L light chain" evidence="2">
    <location>
        <begin position="298"/>
        <end position="339"/>
    </location>
</feature>
<feature type="active site" evidence="1">
    <location>
        <position position="146"/>
    </location>
</feature>
<feature type="active site" evidence="1">
    <location>
        <position position="285"/>
    </location>
</feature>
<feature type="active site" evidence="1">
    <location>
        <position position="306"/>
    </location>
</feature>
<feature type="glycosylation site" description="N-linked (GlcNAc...) asparagine" evidence="4">
    <location>
        <position position="95"/>
    </location>
</feature>
<feature type="disulfide bond" evidence="1">
    <location>
        <begin position="143"/>
        <end position="186"/>
    </location>
</feature>
<feature type="disulfide bond" evidence="1">
    <location>
        <begin position="177"/>
        <end position="219"/>
    </location>
</feature>
<feature type="disulfide bond" description="Interchain (between heavy and light chains)" evidence="1">
    <location>
        <begin position="278"/>
        <end position="328"/>
    </location>
</feature>
<dbReference type="EC" id="3.4.22.15" evidence="5"/>
<dbReference type="RefSeq" id="XP_001655999.2">
    <property type="nucleotide sequence ID" value="XM_001655949.2"/>
</dbReference>
<dbReference type="SMR" id="A0A1S4F2V5"/>
<dbReference type="FunCoup" id="A0A1S4F2V5">
    <property type="interactions" value="276"/>
</dbReference>
<dbReference type="EnsemblMetazoa" id="AAEL002833-RA">
    <property type="protein sequence ID" value="AAEL002833-PA"/>
    <property type="gene ID" value="AAEL002833"/>
</dbReference>
<dbReference type="GeneID" id="5576221"/>
<dbReference type="VEuPathDB" id="VectorBase:AAEL002833"/>
<dbReference type="InParanoid" id="A0A1S4F2V5"/>
<dbReference type="OrthoDB" id="10253408at2759"/>
<dbReference type="Proteomes" id="UP000008820">
    <property type="component" value="Chromosome 3"/>
</dbReference>
<dbReference type="GO" id="GO:0008234">
    <property type="term" value="F:cysteine-type peptidase activity"/>
    <property type="evidence" value="ECO:0007669"/>
    <property type="project" value="UniProtKB-KW"/>
</dbReference>
<dbReference type="GO" id="GO:0006508">
    <property type="term" value="P:proteolysis"/>
    <property type="evidence" value="ECO:0007669"/>
    <property type="project" value="UniProtKB-KW"/>
</dbReference>
<dbReference type="CDD" id="cd02248">
    <property type="entry name" value="Peptidase_C1A"/>
    <property type="match status" value="1"/>
</dbReference>
<dbReference type="FunFam" id="3.90.70.10:FF:000006">
    <property type="entry name" value="Cathepsin S"/>
    <property type="match status" value="1"/>
</dbReference>
<dbReference type="Gene3D" id="3.90.70.10">
    <property type="entry name" value="Cysteine proteinases"/>
    <property type="match status" value="1"/>
</dbReference>
<dbReference type="InterPro" id="IPR038765">
    <property type="entry name" value="Papain-like_cys_pep_sf"/>
</dbReference>
<dbReference type="InterPro" id="IPR025661">
    <property type="entry name" value="Pept_asp_AS"/>
</dbReference>
<dbReference type="InterPro" id="IPR000169">
    <property type="entry name" value="Pept_cys_AS"/>
</dbReference>
<dbReference type="InterPro" id="IPR025660">
    <property type="entry name" value="Pept_his_AS"/>
</dbReference>
<dbReference type="InterPro" id="IPR013128">
    <property type="entry name" value="Peptidase_C1A"/>
</dbReference>
<dbReference type="InterPro" id="IPR000668">
    <property type="entry name" value="Peptidase_C1A_C"/>
</dbReference>
<dbReference type="InterPro" id="IPR039417">
    <property type="entry name" value="Peptidase_C1A_papain-like"/>
</dbReference>
<dbReference type="InterPro" id="IPR013201">
    <property type="entry name" value="Prot_inhib_I29"/>
</dbReference>
<dbReference type="PANTHER" id="PTHR12411">
    <property type="entry name" value="CYSTEINE PROTEASE FAMILY C1-RELATED"/>
    <property type="match status" value="1"/>
</dbReference>
<dbReference type="Pfam" id="PF08246">
    <property type="entry name" value="Inhibitor_I29"/>
    <property type="match status" value="1"/>
</dbReference>
<dbReference type="Pfam" id="PF00112">
    <property type="entry name" value="Peptidase_C1"/>
    <property type="match status" value="1"/>
</dbReference>
<dbReference type="PRINTS" id="PR00705">
    <property type="entry name" value="PAPAIN"/>
</dbReference>
<dbReference type="SMART" id="SM00848">
    <property type="entry name" value="Inhibitor_I29"/>
    <property type="match status" value="1"/>
</dbReference>
<dbReference type="SMART" id="SM00645">
    <property type="entry name" value="Pept_C1"/>
    <property type="match status" value="1"/>
</dbReference>
<dbReference type="SUPFAM" id="SSF54001">
    <property type="entry name" value="Cysteine proteinases"/>
    <property type="match status" value="1"/>
</dbReference>
<dbReference type="PROSITE" id="PS00640">
    <property type="entry name" value="THIOL_PROTEASE_ASN"/>
    <property type="match status" value="1"/>
</dbReference>
<dbReference type="PROSITE" id="PS00139">
    <property type="entry name" value="THIOL_PROTEASE_CYS"/>
    <property type="match status" value="1"/>
</dbReference>
<dbReference type="PROSITE" id="PS00639">
    <property type="entry name" value="THIOL_PROTEASE_HIS"/>
    <property type="match status" value="1"/>
</dbReference>
<accession>A0A1S4F2V5</accession>
<proteinExistence type="evidence at protein level"/>
<keyword id="KW-1015">Disulfide bond</keyword>
<keyword id="KW-0325">Glycoprotein</keyword>
<keyword id="KW-0378">Hydrolase</keyword>
<keyword id="KW-0645">Protease</keyword>
<keyword id="KW-1185">Reference proteome</keyword>
<keyword id="KW-0732">Signal</keyword>
<keyword id="KW-0788">Thiol protease</keyword>
<keyword id="KW-0865">Zymogen</keyword>
<name>CATL_AEDAE</name>
<comment type="function">
    <text evidence="5">Proteinase exhibiting preference for Leu, Val and Phe residues at the P2 position.</text>
</comment>
<comment type="catalytic activity">
    <reaction evidence="6">
        <text>Specificity close to that of papain. As compared to cathepsin B, cathepsin L exhibits higher activity toward protein substrates, but has little activity on Z-Arg-Arg-NHMec, and no peptidyl-dipeptidase activity.</text>
        <dbReference type="EC" id="3.4.22.15"/>
    </reaction>
</comment>
<comment type="activity regulation">
    <text evidence="5">More active in the presence of a reducing agent DTT.</text>
</comment>
<comment type="biophysicochemical properties">
    <phDependence>
        <text evidence="5">Optimum pH is 5.0.</text>
    </phDependence>
</comment>
<comment type="subunit">
    <text evidence="1 5">Dimer of a heavy and a light chain linked by disulfide bonds (By similarity). Interacts with cystatin; the interaction results in inhibition of cathepsin L-like peptidase activity (PubMed:31857170).</text>
</comment>
<comment type="tissue specificity">
    <text evidence="5">Salivary gland (PubMed:31857170). Midgut (PubMed:31857170).</text>
</comment>
<comment type="miscellaneous">
    <text evidence="5">Negative correlation between cathepsin L-like peptidase transcription and titers of dengue virus type 2 is observed in infected mosquitoes.</text>
</comment>
<comment type="similarity">
    <text evidence="7">Belongs to the peptidase C1 family.</text>
</comment>
<evidence type="ECO:0000250" key="1">
    <source>
        <dbReference type="UniProtKB" id="P07711"/>
    </source>
</evidence>
<evidence type="ECO:0000250" key="2">
    <source>
        <dbReference type="UniProtKB" id="Q95029"/>
    </source>
</evidence>
<evidence type="ECO:0000255" key="3"/>
<evidence type="ECO:0000255" key="4">
    <source>
        <dbReference type="PROSITE-ProRule" id="PRU00498"/>
    </source>
</evidence>
<evidence type="ECO:0000269" key="5">
    <source>
    </source>
</evidence>
<evidence type="ECO:0000303" key="6">
    <source>
    </source>
</evidence>
<evidence type="ECO:0000305" key="7"/>
<evidence type="ECO:0000312" key="8">
    <source>
        <dbReference type="Proteomes" id="UP000008820"/>
    </source>
</evidence>
<reference evidence="8" key="1">
    <citation type="journal article" date="2018" name="Nature">
        <title>Improved reference genome of Aedes aegypti informs arbovirus vector control.</title>
        <authorList>
            <person name="Matthews B.J."/>
            <person name="Dudchenko O."/>
            <person name="Kingan S.B."/>
            <person name="Koren S."/>
            <person name="Antoshechkin I."/>
            <person name="Crawford J.E."/>
            <person name="Glassford W.J."/>
            <person name="Herre M."/>
            <person name="Redmond S.N."/>
            <person name="Rose N.H."/>
            <person name="Weedall G.D."/>
            <person name="Wu Y."/>
            <person name="Batra S.S."/>
            <person name="Brito-Sierra C.A."/>
            <person name="Buckingham S.D."/>
            <person name="Campbell C.L."/>
            <person name="Chan S."/>
            <person name="Cox E."/>
            <person name="Evans B.R."/>
            <person name="Fansiri T."/>
            <person name="Filipovic I."/>
            <person name="Fontaine A."/>
            <person name="Gloria-Soria A."/>
            <person name="Hall R."/>
            <person name="Joardar V.S."/>
            <person name="Jones A.K."/>
            <person name="Kay R.G.G."/>
            <person name="Kodali V.K."/>
            <person name="Lee J."/>
            <person name="Lycett G.J."/>
            <person name="Mitchell S.N."/>
            <person name="Muehling J."/>
            <person name="Murphy M.R."/>
            <person name="Omer A.D."/>
            <person name="Partridge F.A."/>
            <person name="Peluso P."/>
            <person name="Aiden A.P."/>
            <person name="Ramasamy V."/>
            <person name="Rasic G."/>
            <person name="Roy S."/>
            <person name="Saavedra-Rodriguez K."/>
            <person name="Sharan S."/>
            <person name="Sharma A."/>
            <person name="Smith M.L."/>
            <person name="Turner J."/>
            <person name="Weakley A.M."/>
            <person name="Zhao Z."/>
            <person name="Akbari O.S."/>
            <person name="Black W.C. IV"/>
            <person name="Cao H."/>
            <person name="Darby A.C."/>
            <person name="Hill C.A."/>
            <person name="Johnston J.S."/>
            <person name="Murphy T.D."/>
            <person name="Raikhel A.S."/>
            <person name="Sattelle D.B."/>
            <person name="Sharakhov I.V."/>
            <person name="White B.J."/>
            <person name="Zhao L."/>
            <person name="Aiden E.L."/>
            <person name="Mann R.S."/>
            <person name="Lambrechts L."/>
            <person name="Powell J.R."/>
            <person name="Sharakhova M.V."/>
            <person name="Tu Z."/>
            <person name="Robertson H.M."/>
            <person name="McBride C.S."/>
            <person name="Hastie A.R."/>
            <person name="Korlach J."/>
            <person name="Neafsey D.E."/>
            <person name="Phillippy A.M."/>
            <person name="Vosshall L.B."/>
        </authorList>
    </citation>
    <scope>NUCLEOTIDE SEQUENCE [LARGE SCALE GENOMIC DNA]</scope>
    <source>
        <strain evidence="8">LVP_AGWG</strain>
    </source>
</reference>
<reference evidence="7" key="2">
    <citation type="journal article" date="2020" name="Int. J. Biol. Macromol.">
        <title>The first characterization of a cystatin and a cathepsin L-like peptidase from Aedes aegypti and their possible role in DENV infection by the modulation of apoptosis.</title>
        <authorList>
            <person name="Oliveira F.A.A."/>
            <person name="Buri M.V."/>
            <person name="Rodriguez B.L."/>
            <person name="Costa-da-Silva A.L."/>
            <person name="Araujo H.R.C."/>
            <person name="Capurro M.L."/>
            <person name="Lu S."/>
            <person name="Tanaka A.S."/>
        </authorList>
    </citation>
    <scope>FUNCTION</scope>
    <scope>CATALYTIC ACTIVITY</scope>
    <scope>ACTIVITY REGULATION</scope>
    <scope>BIOPHYSICOCHEMICAL PROPERTIES</scope>
    <scope>INTERACTION WITH CYSTATIN</scope>
    <scope>TISSUE SPECIFICITY</scope>
</reference>
<sequence length="339" mass="38015">MKILILLVAFVAAANAVSLYELVKEEWNAFKLQHRKNYDSETEERIRLKIYVQNKHKIAKHNQRFDLGQEKYRLRVNKYADLLHEEFVQTVNGFNRTDSKKSLKGVRIEEPVTFIEPANVEVPTTVDWRKKGAVTPVKDQGHCGSCWSFSATGALEGQHFRKTGKLVSLSEQNLVDCSGKYGNNGCNGGMMDYAFQYIKDNGGIDTEKSYPYEAIDDTCHFNPKAVGATDKGYVDIPQGDEEALKKALATVGPVSIAIDASHESFQFYSEGVYYEPQCDSENLDHGVLAVGYGTSEEGEDYWLVKNSWGTTWGDQGYVKMARNRDNHCGVATCASYPLV</sequence>